<sequence length="162" mass="19234">MLQTNNYSLVLLIQLALLTFDLFVNSFSELLRSAPVIQLVLFIIQDIGILFNVIIILLMMFNTYVFQVGLVSLLLERFRAMLILSALYLTLSICFHCWVMNLRWMESNRFVWTDGLQVLFVFQRIAAVLYYYFYKRTTEYLGDPRLYEDSPWLRDAFARARQ</sequence>
<reference key="1">
    <citation type="journal article" date="2013" name="Nature">
        <title>The zebrafish reference genome sequence and its relationship to the human genome.</title>
        <authorList>
            <person name="Howe K."/>
            <person name="Clark M.D."/>
            <person name="Torroja C.F."/>
            <person name="Torrance J."/>
            <person name="Berthelot C."/>
            <person name="Muffato M."/>
            <person name="Collins J.E."/>
            <person name="Humphray S."/>
            <person name="McLaren K."/>
            <person name="Matthews L."/>
            <person name="McLaren S."/>
            <person name="Sealy I."/>
            <person name="Caccamo M."/>
            <person name="Churcher C."/>
            <person name="Scott C."/>
            <person name="Barrett J.C."/>
            <person name="Koch R."/>
            <person name="Rauch G.J."/>
            <person name="White S."/>
            <person name="Chow W."/>
            <person name="Kilian B."/>
            <person name="Quintais L.T."/>
            <person name="Guerra-Assuncao J.A."/>
            <person name="Zhou Y."/>
            <person name="Gu Y."/>
            <person name="Yen J."/>
            <person name="Vogel J.H."/>
            <person name="Eyre T."/>
            <person name="Redmond S."/>
            <person name="Banerjee R."/>
            <person name="Chi J."/>
            <person name="Fu B."/>
            <person name="Langley E."/>
            <person name="Maguire S.F."/>
            <person name="Laird G.K."/>
            <person name="Lloyd D."/>
            <person name="Kenyon E."/>
            <person name="Donaldson S."/>
            <person name="Sehra H."/>
            <person name="Almeida-King J."/>
            <person name="Loveland J."/>
            <person name="Trevanion S."/>
            <person name="Jones M."/>
            <person name="Quail M."/>
            <person name="Willey D."/>
            <person name="Hunt A."/>
            <person name="Burton J."/>
            <person name="Sims S."/>
            <person name="McLay K."/>
            <person name="Plumb B."/>
            <person name="Davis J."/>
            <person name="Clee C."/>
            <person name="Oliver K."/>
            <person name="Clark R."/>
            <person name="Riddle C."/>
            <person name="Elliot D."/>
            <person name="Threadgold G."/>
            <person name="Harden G."/>
            <person name="Ware D."/>
            <person name="Begum S."/>
            <person name="Mortimore B."/>
            <person name="Kerry G."/>
            <person name="Heath P."/>
            <person name="Phillimore B."/>
            <person name="Tracey A."/>
            <person name="Corby N."/>
            <person name="Dunn M."/>
            <person name="Johnson C."/>
            <person name="Wood J."/>
            <person name="Clark S."/>
            <person name="Pelan S."/>
            <person name="Griffiths G."/>
            <person name="Smith M."/>
            <person name="Glithero R."/>
            <person name="Howden P."/>
            <person name="Barker N."/>
            <person name="Lloyd C."/>
            <person name="Stevens C."/>
            <person name="Harley J."/>
            <person name="Holt K."/>
            <person name="Panagiotidis G."/>
            <person name="Lovell J."/>
            <person name="Beasley H."/>
            <person name="Henderson C."/>
            <person name="Gordon D."/>
            <person name="Auger K."/>
            <person name="Wright D."/>
            <person name="Collins J."/>
            <person name="Raisen C."/>
            <person name="Dyer L."/>
            <person name="Leung K."/>
            <person name="Robertson L."/>
            <person name="Ambridge K."/>
            <person name="Leongamornlert D."/>
            <person name="McGuire S."/>
            <person name="Gilderthorp R."/>
            <person name="Griffiths C."/>
            <person name="Manthravadi D."/>
            <person name="Nichol S."/>
            <person name="Barker G."/>
            <person name="Whitehead S."/>
            <person name="Kay M."/>
            <person name="Brown J."/>
            <person name="Murnane C."/>
            <person name="Gray E."/>
            <person name="Humphries M."/>
            <person name="Sycamore N."/>
            <person name="Barker D."/>
            <person name="Saunders D."/>
            <person name="Wallis J."/>
            <person name="Babbage A."/>
            <person name="Hammond S."/>
            <person name="Mashreghi-Mohammadi M."/>
            <person name="Barr L."/>
            <person name="Martin S."/>
            <person name="Wray P."/>
            <person name="Ellington A."/>
            <person name="Matthews N."/>
            <person name="Ellwood M."/>
            <person name="Woodmansey R."/>
            <person name="Clark G."/>
            <person name="Cooper J."/>
            <person name="Tromans A."/>
            <person name="Grafham D."/>
            <person name="Skuce C."/>
            <person name="Pandian R."/>
            <person name="Andrews R."/>
            <person name="Harrison E."/>
            <person name="Kimberley A."/>
            <person name="Garnett J."/>
            <person name="Fosker N."/>
            <person name="Hall R."/>
            <person name="Garner P."/>
            <person name="Kelly D."/>
            <person name="Bird C."/>
            <person name="Palmer S."/>
            <person name="Gehring I."/>
            <person name="Berger A."/>
            <person name="Dooley C.M."/>
            <person name="Ersan-Urun Z."/>
            <person name="Eser C."/>
            <person name="Geiger H."/>
            <person name="Geisler M."/>
            <person name="Karotki L."/>
            <person name="Kirn A."/>
            <person name="Konantz J."/>
            <person name="Konantz M."/>
            <person name="Oberlander M."/>
            <person name="Rudolph-Geiger S."/>
            <person name="Teucke M."/>
            <person name="Lanz C."/>
            <person name="Raddatz G."/>
            <person name="Osoegawa K."/>
            <person name="Zhu B."/>
            <person name="Rapp A."/>
            <person name="Widaa S."/>
            <person name="Langford C."/>
            <person name="Yang F."/>
            <person name="Schuster S.C."/>
            <person name="Carter N.P."/>
            <person name="Harrow J."/>
            <person name="Ning Z."/>
            <person name="Herrero J."/>
            <person name="Searle S.M."/>
            <person name="Enright A."/>
            <person name="Geisler R."/>
            <person name="Plasterk R.H."/>
            <person name="Lee C."/>
            <person name="Westerfield M."/>
            <person name="de Jong P.J."/>
            <person name="Zon L.I."/>
            <person name="Postlethwait J.H."/>
            <person name="Nusslein-Volhard C."/>
            <person name="Hubbard T.J."/>
            <person name="Roest Crollius H."/>
            <person name="Rogers J."/>
            <person name="Stemple D.L."/>
        </authorList>
    </citation>
    <scope>NUCLEOTIDE SEQUENCE [LARGE SCALE GENOMIC DNA]</scope>
    <source>
        <strain>Tuebingen</strain>
    </source>
</reference>
<reference key="2">
    <citation type="journal article" date="2012" name="Science">
        <title>Evolutionarily assembled cis-regulatory module at a human ciliopathy locus.</title>
        <authorList>
            <person name="Lee J.H."/>
            <person name="Silhavy J.L."/>
            <person name="Lee J.E."/>
            <person name="Al-Gazali L."/>
            <person name="Thomas S."/>
            <person name="Davis E.E."/>
            <person name="Bielas S.L."/>
            <person name="Hill K.J."/>
            <person name="Iannicelli M."/>
            <person name="Brancati F."/>
            <person name="Gabriel S.B."/>
            <person name="Russ C."/>
            <person name="Logan C.V."/>
            <person name="Sharif S.M."/>
            <person name="Bennett C.P."/>
            <person name="Abe M."/>
            <person name="Hildebrandt F."/>
            <person name="Diplas B.H."/>
            <person name="Attie-Bitach T."/>
            <person name="Katsanis N."/>
            <person name="Rajab A."/>
            <person name="Koul R."/>
            <person name="Sztriha L."/>
            <person name="Waters E.R."/>
            <person name="Ferro-Novick S."/>
            <person name="Woods G.C."/>
            <person name="Johnson C.A."/>
            <person name="Valente E.M."/>
            <person name="Zaki M.S."/>
            <person name="Gleeson J.G."/>
        </authorList>
    </citation>
    <scope>DISRUPTION PHENOTYPE</scope>
</reference>
<proteinExistence type="inferred from homology"/>
<organism>
    <name type="scientific">Danio rerio</name>
    <name type="common">Zebrafish</name>
    <name type="synonym">Brachydanio rerio</name>
    <dbReference type="NCBI Taxonomy" id="7955"/>
    <lineage>
        <taxon>Eukaryota</taxon>
        <taxon>Metazoa</taxon>
        <taxon>Chordata</taxon>
        <taxon>Craniata</taxon>
        <taxon>Vertebrata</taxon>
        <taxon>Euteleostomi</taxon>
        <taxon>Actinopterygii</taxon>
        <taxon>Neopterygii</taxon>
        <taxon>Teleostei</taxon>
        <taxon>Ostariophysi</taxon>
        <taxon>Cypriniformes</taxon>
        <taxon>Danionidae</taxon>
        <taxon>Danioninae</taxon>
        <taxon>Danio</taxon>
    </lineage>
</organism>
<comment type="function">
    <text evidence="1">Required for ciliogenesis.</text>
</comment>
<comment type="subcellular location">
    <subcellularLocation>
        <location evidence="1">Vacuole membrane</location>
        <topology evidence="1">Multi-pass membrane protein</topology>
    </subcellularLocation>
    <subcellularLocation>
        <location evidence="1">Cell projection</location>
        <location evidence="1">Cilium</location>
    </subcellularLocation>
    <text evidence="1">Localizes to vesicles en route to the base of cilium.</text>
</comment>
<comment type="disruption phenotype">
    <text evidence="3">Ciliary phenotypes such as pericardial effusion, curved or kinked tail, as well as gastrulation defects.</text>
</comment>
<comment type="similarity">
    <text evidence="4">Belongs to the TMEM138 family.</text>
</comment>
<dbReference type="EMBL" id="CU855758">
    <property type="status" value="NOT_ANNOTATED_CDS"/>
    <property type="molecule type" value="Genomic_DNA"/>
</dbReference>
<dbReference type="RefSeq" id="NP_001410775.1">
    <property type="nucleotide sequence ID" value="NM_001423846.1"/>
</dbReference>
<dbReference type="RefSeq" id="XP_002666816.1">
    <property type="nucleotide sequence ID" value="XM_002666770.4"/>
</dbReference>
<dbReference type="SMR" id="E7FDE0"/>
<dbReference type="FunCoup" id="E7FDE0">
    <property type="interactions" value="661"/>
</dbReference>
<dbReference type="STRING" id="7955.ENSDARP00000129379"/>
<dbReference type="GlyCosmos" id="E7FDE0">
    <property type="glycosylation" value="1 site, No reported glycans"/>
</dbReference>
<dbReference type="PaxDb" id="7955-ENSDARP00000129379"/>
<dbReference type="Ensembl" id="ENSDART00000156438">
    <property type="protein sequence ID" value="ENSDARP00000129379"/>
    <property type="gene ID" value="ENSDARG00000090543"/>
</dbReference>
<dbReference type="GeneID" id="100332440"/>
<dbReference type="eggNOG" id="ENOG502RWE6">
    <property type="taxonomic scope" value="Eukaryota"/>
</dbReference>
<dbReference type="HOGENOM" id="CLU_104681_0_0_1"/>
<dbReference type="InParanoid" id="E7FDE0"/>
<dbReference type="OMA" id="FYKRTAM"/>
<dbReference type="OrthoDB" id="189688at2759"/>
<dbReference type="PhylomeDB" id="E7FDE0"/>
<dbReference type="TreeFam" id="TF315159"/>
<dbReference type="PRO" id="PR:E7FDE0"/>
<dbReference type="Proteomes" id="UP000000437">
    <property type="component" value="Chromosome 25"/>
</dbReference>
<dbReference type="Bgee" id="ENSDARG00000090543">
    <property type="expression patterns" value="Expressed in mature ovarian follicle and 21 other cell types or tissues"/>
</dbReference>
<dbReference type="GO" id="GO:0005929">
    <property type="term" value="C:cilium"/>
    <property type="evidence" value="ECO:0000318"/>
    <property type="project" value="GO_Central"/>
</dbReference>
<dbReference type="GO" id="GO:0005774">
    <property type="term" value="C:vacuolar membrane"/>
    <property type="evidence" value="ECO:0007669"/>
    <property type="project" value="UniProtKB-SubCell"/>
</dbReference>
<dbReference type="GO" id="GO:0060271">
    <property type="term" value="P:cilium assembly"/>
    <property type="evidence" value="ECO:0000315"/>
    <property type="project" value="UniProtKB"/>
</dbReference>
<dbReference type="InterPro" id="IPR024133">
    <property type="entry name" value="TM_138"/>
</dbReference>
<dbReference type="PANTHER" id="PTHR13306">
    <property type="entry name" value="TRANSMEMBRANE PROTEIN 138"/>
    <property type="match status" value="1"/>
</dbReference>
<dbReference type="PANTHER" id="PTHR13306:SF6">
    <property type="entry name" value="TRANSMEMBRANE PROTEIN 138"/>
    <property type="match status" value="1"/>
</dbReference>
<dbReference type="Pfam" id="PF14935">
    <property type="entry name" value="TMEM138"/>
    <property type="match status" value="1"/>
</dbReference>
<feature type="chain" id="PRO_0000416296" description="Transmembrane protein 138">
    <location>
        <begin position="1"/>
        <end position="162"/>
    </location>
</feature>
<feature type="transmembrane region" description="Helical" evidence="2">
    <location>
        <begin position="7"/>
        <end position="27"/>
    </location>
</feature>
<feature type="transmembrane region" description="Helical" evidence="2">
    <location>
        <begin position="39"/>
        <end position="59"/>
    </location>
</feature>
<feature type="transmembrane region" description="Helical" evidence="2">
    <location>
        <begin position="80"/>
        <end position="100"/>
    </location>
</feature>
<feature type="transmembrane region" description="Helical" evidence="2">
    <location>
        <begin position="110"/>
        <end position="130"/>
    </location>
</feature>
<feature type="glycosylation site" description="N-linked (GlcNAc...) asparagine" evidence="2">
    <location>
        <position position="6"/>
    </location>
</feature>
<accession>E7FDE0</accession>
<protein>
    <recommendedName>
        <fullName>Transmembrane protein 138</fullName>
    </recommendedName>
</protein>
<gene>
    <name type="primary">tmem138</name>
</gene>
<keyword id="KW-0966">Cell projection</keyword>
<keyword id="KW-0969">Cilium</keyword>
<keyword id="KW-0970">Cilium biogenesis/degradation</keyword>
<keyword id="KW-0325">Glycoprotein</keyword>
<keyword id="KW-0472">Membrane</keyword>
<keyword id="KW-1185">Reference proteome</keyword>
<keyword id="KW-0812">Transmembrane</keyword>
<keyword id="KW-1133">Transmembrane helix</keyword>
<keyword id="KW-0926">Vacuole</keyword>
<evidence type="ECO:0000250" key="1"/>
<evidence type="ECO:0000255" key="2"/>
<evidence type="ECO:0000269" key="3">
    <source>
    </source>
</evidence>
<evidence type="ECO:0000305" key="4"/>
<name>TM138_DANRE</name>